<dbReference type="EMBL" id="CP000485">
    <property type="protein sequence ID" value="ABK83513.1"/>
    <property type="molecule type" value="Genomic_DNA"/>
</dbReference>
<dbReference type="RefSeq" id="WP_000159736.1">
    <property type="nucleotide sequence ID" value="NC_008600.1"/>
</dbReference>
<dbReference type="SMR" id="A0R8H0"/>
<dbReference type="GeneID" id="93010953"/>
<dbReference type="KEGG" id="btl:BALH_0098"/>
<dbReference type="HOGENOM" id="CLU_086499_3_2_9"/>
<dbReference type="GO" id="GO:0022625">
    <property type="term" value="C:cytosolic large ribosomal subunit"/>
    <property type="evidence" value="ECO:0007669"/>
    <property type="project" value="TreeGrafter"/>
</dbReference>
<dbReference type="GO" id="GO:0003729">
    <property type="term" value="F:mRNA binding"/>
    <property type="evidence" value="ECO:0007669"/>
    <property type="project" value="TreeGrafter"/>
</dbReference>
<dbReference type="GO" id="GO:0003735">
    <property type="term" value="F:structural constituent of ribosome"/>
    <property type="evidence" value="ECO:0007669"/>
    <property type="project" value="InterPro"/>
</dbReference>
<dbReference type="GO" id="GO:0006412">
    <property type="term" value="P:translation"/>
    <property type="evidence" value="ECO:0007669"/>
    <property type="project" value="UniProtKB-UniRule"/>
</dbReference>
<dbReference type="CDD" id="cd00387">
    <property type="entry name" value="Ribosomal_L7_L12"/>
    <property type="match status" value="1"/>
</dbReference>
<dbReference type="FunFam" id="1.20.5.710:FF:000002">
    <property type="entry name" value="50S ribosomal protein L7/L12"/>
    <property type="match status" value="1"/>
</dbReference>
<dbReference type="FunFam" id="3.30.1390.10:FF:000001">
    <property type="entry name" value="50S ribosomal protein L7/L12"/>
    <property type="match status" value="1"/>
</dbReference>
<dbReference type="Gene3D" id="3.30.1390.10">
    <property type="match status" value="1"/>
</dbReference>
<dbReference type="Gene3D" id="1.20.5.710">
    <property type="entry name" value="Single helix bin"/>
    <property type="match status" value="1"/>
</dbReference>
<dbReference type="HAMAP" id="MF_00368">
    <property type="entry name" value="Ribosomal_bL12"/>
    <property type="match status" value="1"/>
</dbReference>
<dbReference type="InterPro" id="IPR000206">
    <property type="entry name" value="Ribosomal_bL12"/>
</dbReference>
<dbReference type="InterPro" id="IPR013823">
    <property type="entry name" value="Ribosomal_bL12_C"/>
</dbReference>
<dbReference type="InterPro" id="IPR014719">
    <property type="entry name" value="Ribosomal_bL12_C/ClpS-like"/>
</dbReference>
<dbReference type="InterPro" id="IPR008932">
    <property type="entry name" value="Ribosomal_bL12_oligo"/>
</dbReference>
<dbReference type="InterPro" id="IPR036235">
    <property type="entry name" value="Ribosomal_bL12_oligo_N_sf"/>
</dbReference>
<dbReference type="NCBIfam" id="TIGR00855">
    <property type="entry name" value="L12"/>
    <property type="match status" value="1"/>
</dbReference>
<dbReference type="PANTHER" id="PTHR45987">
    <property type="entry name" value="39S RIBOSOMAL PROTEIN L12"/>
    <property type="match status" value="1"/>
</dbReference>
<dbReference type="PANTHER" id="PTHR45987:SF4">
    <property type="entry name" value="LARGE RIBOSOMAL SUBUNIT PROTEIN BL12M"/>
    <property type="match status" value="1"/>
</dbReference>
<dbReference type="Pfam" id="PF00542">
    <property type="entry name" value="Ribosomal_L12"/>
    <property type="match status" value="1"/>
</dbReference>
<dbReference type="Pfam" id="PF16320">
    <property type="entry name" value="Ribosomal_L12_N"/>
    <property type="match status" value="1"/>
</dbReference>
<dbReference type="SUPFAM" id="SSF54736">
    <property type="entry name" value="ClpS-like"/>
    <property type="match status" value="1"/>
</dbReference>
<dbReference type="SUPFAM" id="SSF48300">
    <property type="entry name" value="Ribosomal protein L7/12, oligomerisation (N-terminal) domain"/>
    <property type="match status" value="1"/>
</dbReference>
<comment type="function">
    <text evidence="1">Forms part of the ribosomal stalk which helps the ribosome interact with GTP-bound translation factors. Is thus essential for accurate translation.</text>
</comment>
<comment type="subunit">
    <text evidence="1">Homodimer. Part of the ribosomal stalk of the 50S ribosomal subunit. Forms a multimeric L10(L12)X complex, where L10 forms an elongated spine to which 2 to 4 L12 dimers bind in a sequential fashion. Binds GTP-bound translation factors.</text>
</comment>
<comment type="similarity">
    <text evidence="1">Belongs to the bacterial ribosomal protein bL12 family.</text>
</comment>
<proteinExistence type="inferred from homology"/>
<protein>
    <recommendedName>
        <fullName evidence="1">Large ribosomal subunit protein bL12</fullName>
    </recommendedName>
    <alternativeName>
        <fullName evidence="2">50S ribosomal protein L7/L12</fullName>
    </alternativeName>
</protein>
<name>RL7_BACAH</name>
<keyword id="KW-0687">Ribonucleoprotein</keyword>
<keyword id="KW-0689">Ribosomal protein</keyword>
<organism>
    <name type="scientific">Bacillus thuringiensis (strain Al Hakam)</name>
    <dbReference type="NCBI Taxonomy" id="412694"/>
    <lineage>
        <taxon>Bacteria</taxon>
        <taxon>Bacillati</taxon>
        <taxon>Bacillota</taxon>
        <taxon>Bacilli</taxon>
        <taxon>Bacillales</taxon>
        <taxon>Bacillaceae</taxon>
        <taxon>Bacillus</taxon>
        <taxon>Bacillus cereus group</taxon>
    </lineage>
</organism>
<evidence type="ECO:0000255" key="1">
    <source>
        <dbReference type="HAMAP-Rule" id="MF_00368"/>
    </source>
</evidence>
<evidence type="ECO:0000305" key="2"/>
<accession>A0R8H0</accession>
<sequence>MTKEQIIEAVKSMTVLELNDLVKAIEEEFGVTAAAPVAVAGGAGEAAAEKTEFDVELTSAGAQKIKVIKVVREITGLGLKEAKELVDNTPKVIKEAAAKEEAEEIKAKLEEVGAAVEVK</sequence>
<reference key="1">
    <citation type="journal article" date="2007" name="J. Bacteriol.">
        <title>The complete genome sequence of Bacillus thuringiensis Al Hakam.</title>
        <authorList>
            <person name="Challacombe J.F."/>
            <person name="Altherr M.R."/>
            <person name="Xie G."/>
            <person name="Bhotika S.S."/>
            <person name="Brown N."/>
            <person name="Bruce D."/>
            <person name="Campbell C.S."/>
            <person name="Campbell M.L."/>
            <person name="Chen J."/>
            <person name="Chertkov O."/>
            <person name="Cleland C."/>
            <person name="Dimitrijevic M."/>
            <person name="Doggett N.A."/>
            <person name="Fawcett J.J."/>
            <person name="Glavina T."/>
            <person name="Goodwin L.A."/>
            <person name="Green L.D."/>
            <person name="Han C.S."/>
            <person name="Hill K.K."/>
            <person name="Hitchcock P."/>
            <person name="Jackson P.J."/>
            <person name="Keim P."/>
            <person name="Kewalramani A.R."/>
            <person name="Longmire J."/>
            <person name="Lucas S."/>
            <person name="Malfatti S."/>
            <person name="Martinez D."/>
            <person name="McMurry K."/>
            <person name="Meincke L.J."/>
            <person name="Misra M."/>
            <person name="Moseman B.L."/>
            <person name="Mundt M."/>
            <person name="Munk A.C."/>
            <person name="Okinaka R.T."/>
            <person name="Parson-Quintana B."/>
            <person name="Reilly L.P."/>
            <person name="Richardson P."/>
            <person name="Robinson D.L."/>
            <person name="Saunders E."/>
            <person name="Tapia R."/>
            <person name="Tesmer J.G."/>
            <person name="Thayer N."/>
            <person name="Thompson L.S."/>
            <person name="Tice H."/>
            <person name="Ticknor L.O."/>
            <person name="Wills P.L."/>
            <person name="Gilna P."/>
            <person name="Brettin T.S."/>
        </authorList>
    </citation>
    <scope>NUCLEOTIDE SEQUENCE [LARGE SCALE GENOMIC DNA]</scope>
    <source>
        <strain>Al Hakam</strain>
    </source>
</reference>
<feature type="chain" id="PRO_1000006959" description="Large ribosomal subunit protein bL12">
    <location>
        <begin position="1"/>
        <end position="119"/>
    </location>
</feature>
<gene>
    <name evidence="1" type="primary">rplL</name>
    <name type="ordered locus">BALH_0098</name>
</gene>